<proteinExistence type="inferred from homology"/>
<name>SYP_AGRFC</name>
<reference key="1">
    <citation type="journal article" date="2001" name="Science">
        <title>The genome of the natural genetic engineer Agrobacterium tumefaciens C58.</title>
        <authorList>
            <person name="Wood D.W."/>
            <person name="Setubal J.C."/>
            <person name="Kaul R."/>
            <person name="Monks D.E."/>
            <person name="Kitajima J.P."/>
            <person name="Okura V.K."/>
            <person name="Zhou Y."/>
            <person name="Chen L."/>
            <person name="Wood G.E."/>
            <person name="Almeida N.F. Jr."/>
            <person name="Woo L."/>
            <person name="Chen Y."/>
            <person name="Paulsen I.T."/>
            <person name="Eisen J.A."/>
            <person name="Karp P.D."/>
            <person name="Bovee D. Sr."/>
            <person name="Chapman P."/>
            <person name="Clendenning J."/>
            <person name="Deatherage G."/>
            <person name="Gillet W."/>
            <person name="Grant C."/>
            <person name="Kutyavin T."/>
            <person name="Levy R."/>
            <person name="Li M.-J."/>
            <person name="McClelland E."/>
            <person name="Palmieri A."/>
            <person name="Raymond C."/>
            <person name="Rouse G."/>
            <person name="Saenphimmachak C."/>
            <person name="Wu Z."/>
            <person name="Romero P."/>
            <person name="Gordon D."/>
            <person name="Zhang S."/>
            <person name="Yoo H."/>
            <person name="Tao Y."/>
            <person name="Biddle P."/>
            <person name="Jung M."/>
            <person name="Krespan W."/>
            <person name="Perry M."/>
            <person name="Gordon-Kamm B."/>
            <person name="Liao L."/>
            <person name="Kim S."/>
            <person name="Hendrick C."/>
            <person name="Zhao Z.-Y."/>
            <person name="Dolan M."/>
            <person name="Chumley F."/>
            <person name="Tingey S.V."/>
            <person name="Tomb J.-F."/>
            <person name="Gordon M.P."/>
            <person name="Olson M.V."/>
            <person name="Nester E.W."/>
        </authorList>
    </citation>
    <scope>NUCLEOTIDE SEQUENCE [LARGE SCALE GENOMIC DNA]</scope>
    <source>
        <strain>C58 / ATCC 33970</strain>
    </source>
</reference>
<reference key="2">
    <citation type="journal article" date="2001" name="Science">
        <title>Genome sequence of the plant pathogen and biotechnology agent Agrobacterium tumefaciens C58.</title>
        <authorList>
            <person name="Goodner B."/>
            <person name="Hinkle G."/>
            <person name="Gattung S."/>
            <person name="Miller N."/>
            <person name="Blanchard M."/>
            <person name="Qurollo B."/>
            <person name="Goldman B.S."/>
            <person name="Cao Y."/>
            <person name="Askenazi M."/>
            <person name="Halling C."/>
            <person name="Mullin L."/>
            <person name="Houmiel K."/>
            <person name="Gordon J."/>
            <person name="Vaudin M."/>
            <person name="Iartchouk O."/>
            <person name="Epp A."/>
            <person name="Liu F."/>
            <person name="Wollam C."/>
            <person name="Allinger M."/>
            <person name="Doughty D."/>
            <person name="Scott C."/>
            <person name="Lappas C."/>
            <person name="Markelz B."/>
            <person name="Flanagan C."/>
            <person name="Crowell C."/>
            <person name="Gurson J."/>
            <person name="Lomo C."/>
            <person name="Sear C."/>
            <person name="Strub G."/>
            <person name="Cielo C."/>
            <person name="Slater S."/>
        </authorList>
    </citation>
    <scope>NUCLEOTIDE SEQUENCE [LARGE SCALE GENOMIC DNA]</scope>
    <source>
        <strain>C58 / ATCC 33970</strain>
    </source>
</reference>
<protein>
    <recommendedName>
        <fullName evidence="1">Proline--tRNA ligase</fullName>
        <ecNumber evidence="1">6.1.1.15</ecNumber>
    </recommendedName>
    <alternativeName>
        <fullName evidence="1">Prolyl-tRNA synthetase</fullName>
        <shortName evidence="1">ProRS</shortName>
    </alternativeName>
</protein>
<evidence type="ECO:0000255" key="1">
    <source>
        <dbReference type="HAMAP-Rule" id="MF_01570"/>
    </source>
</evidence>
<organism>
    <name type="scientific">Agrobacterium fabrum (strain C58 / ATCC 33970)</name>
    <name type="common">Agrobacterium tumefaciens (strain C58)</name>
    <dbReference type="NCBI Taxonomy" id="176299"/>
    <lineage>
        <taxon>Bacteria</taxon>
        <taxon>Pseudomonadati</taxon>
        <taxon>Pseudomonadota</taxon>
        <taxon>Alphaproteobacteria</taxon>
        <taxon>Hyphomicrobiales</taxon>
        <taxon>Rhizobiaceae</taxon>
        <taxon>Rhizobium/Agrobacterium group</taxon>
        <taxon>Agrobacterium</taxon>
        <taxon>Agrobacterium tumefaciens complex</taxon>
    </lineage>
</organism>
<keyword id="KW-0030">Aminoacyl-tRNA synthetase</keyword>
<keyword id="KW-0067">ATP-binding</keyword>
<keyword id="KW-0963">Cytoplasm</keyword>
<keyword id="KW-0436">Ligase</keyword>
<keyword id="KW-0547">Nucleotide-binding</keyword>
<keyword id="KW-0648">Protein biosynthesis</keyword>
<keyword id="KW-1185">Reference proteome</keyword>
<dbReference type="EC" id="6.1.1.15" evidence="1"/>
<dbReference type="EMBL" id="AE007869">
    <property type="protein sequence ID" value="AAK87082.2"/>
    <property type="molecule type" value="Genomic_DNA"/>
</dbReference>
<dbReference type="PIR" id="A97516">
    <property type="entry name" value="A97516"/>
</dbReference>
<dbReference type="PIR" id="AH2734">
    <property type="entry name" value="AH2734"/>
</dbReference>
<dbReference type="RefSeq" id="NP_354297.2">
    <property type="nucleotide sequence ID" value="NC_003062.2"/>
</dbReference>
<dbReference type="RefSeq" id="WP_010971520.1">
    <property type="nucleotide sequence ID" value="NC_003062.2"/>
</dbReference>
<dbReference type="SMR" id="Q8UFV9"/>
<dbReference type="STRING" id="176299.Atu1288"/>
<dbReference type="EnsemblBacteria" id="AAK87082">
    <property type="protein sequence ID" value="AAK87082"/>
    <property type="gene ID" value="Atu1288"/>
</dbReference>
<dbReference type="GeneID" id="1133326"/>
<dbReference type="KEGG" id="atu:Atu1288"/>
<dbReference type="PATRIC" id="fig|176299.10.peg.1304"/>
<dbReference type="eggNOG" id="COG0442">
    <property type="taxonomic scope" value="Bacteria"/>
</dbReference>
<dbReference type="HOGENOM" id="CLU_016739_4_2_5"/>
<dbReference type="OrthoDB" id="9809052at2"/>
<dbReference type="PhylomeDB" id="Q8UFV9"/>
<dbReference type="BioCyc" id="AGRO:ATU1288-MONOMER"/>
<dbReference type="Proteomes" id="UP000000813">
    <property type="component" value="Chromosome circular"/>
</dbReference>
<dbReference type="GO" id="GO:0005829">
    <property type="term" value="C:cytosol"/>
    <property type="evidence" value="ECO:0007669"/>
    <property type="project" value="TreeGrafter"/>
</dbReference>
<dbReference type="GO" id="GO:0005524">
    <property type="term" value="F:ATP binding"/>
    <property type="evidence" value="ECO:0007669"/>
    <property type="project" value="UniProtKB-UniRule"/>
</dbReference>
<dbReference type="GO" id="GO:0004827">
    <property type="term" value="F:proline-tRNA ligase activity"/>
    <property type="evidence" value="ECO:0007669"/>
    <property type="project" value="UniProtKB-UniRule"/>
</dbReference>
<dbReference type="GO" id="GO:0006433">
    <property type="term" value="P:prolyl-tRNA aminoacylation"/>
    <property type="evidence" value="ECO:0007669"/>
    <property type="project" value="UniProtKB-UniRule"/>
</dbReference>
<dbReference type="CDD" id="cd00861">
    <property type="entry name" value="ProRS_anticodon_short"/>
    <property type="match status" value="1"/>
</dbReference>
<dbReference type="CDD" id="cd00779">
    <property type="entry name" value="ProRS_core_prok"/>
    <property type="match status" value="1"/>
</dbReference>
<dbReference type="FunFam" id="3.30.930.10:FF:000042">
    <property type="entry name" value="probable proline--tRNA ligase, mitochondrial"/>
    <property type="match status" value="1"/>
</dbReference>
<dbReference type="FunFam" id="3.40.50.800:FF:000032">
    <property type="entry name" value="Proline--tRNA ligase"/>
    <property type="match status" value="1"/>
</dbReference>
<dbReference type="Gene3D" id="3.40.50.800">
    <property type="entry name" value="Anticodon-binding domain"/>
    <property type="match status" value="1"/>
</dbReference>
<dbReference type="Gene3D" id="3.30.930.10">
    <property type="entry name" value="Bira Bifunctional Protein, Domain 2"/>
    <property type="match status" value="1"/>
</dbReference>
<dbReference type="HAMAP" id="MF_01570">
    <property type="entry name" value="Pro_tRNA_synth_type2"/>
    <property type="match status" value="1"/>
</dbReference>
<dbReference type="InterPro" id="IPR002314">
    <property type="entry name" value="aa-tRNA-synt_IIb"/>
</dbReference>
<dbReference type="InterPro" id="IPR006195">
    <property type="entry name" value="aa-tRNA-synth_II"/>
</dbReference>
<dbReference type="InterPro" id="IPR045864">
    <property type="entry name" value="aa-tRNA-synth_II/BPL/LPL"/>
</dbReference>
<dbReference type="InterPro" id="IPR004154">
    <property type="entry name" value="Anticodon-bd"/>
</dbReference>
<dbReference type="InterPro" id="IPR036621">
    <property type="entry name" value="Anticodon-bd_dom_sf"/>
</dbReference>
<dbReference type="InterPro" id="IPR002316">
    <property type="entry name" value="Pro-tRNA-ligase_IIa"/>
</dbReference>
<dbReference type="InterPro" id="IPR004500">
    <property type="entry name" value="Pro-tRNA-synth_IIa_bac-type"/>
</dbReference>
<dbReference type="InterPro" id="IPR050062">
    <property type="entry name" value="Pro-tRNA_synthetase"/>
</dbReference>
<dbReference type="InterPro" id="IPR023716">
    <property type="entry name" value="Prolyl-tRNA_ligase_IIa_type2"/>
</dbReference>
<dbReference type="InterPro" id="IPR044140">
    <property type="entry name" value="ProRS_anticodon_short"/>
</dbReference>
<dbReference type="InterPro" id="IPR033730">
    <property type="entry name" value="ProRS_core_prok"/>
</dbReference>
<dbReference type="NCBIfam" id="NF008979">
    <property type="entry name" value="PRK12325.1"/>
    <property type="match status" value="1"/>
</dbReference>
<dbReference type="NCBIfam" id="TIGR00409">
    <property type="entry name" value="proS_fam_II"/>
    <property type="match status" value="1"/>
</dbReference>
<dbReference type="PANTHER" id="PTHR42753">
    <property type="entry name" value="MITOCHONDRIAL RIBOSOME PROTEIN L39/PROLYL-TRNA LIGASE FAMILY MEMBER"/>
    <property type="match status" value="1"/>
</dbReference>
<dbReference type="PANTHER" id="PTHR42753:SF2">
    <property type="entry name" value="PROLINE--TRNA LIGASE"/>
    <property type="match status" value="1"/>
</dbReference>
<dbReference type="Pfam" id="PF03129">
    <property type="entry name" value="HGTP_anticodon"/>
    <property type="match status" value="1"/>
</dbReference>
<dbReference type="Pfam" id="PF00587">
    <property type="entry name" value="tRNA-synt_2b"/>
    <property type="match status" value="1"/>
</dbReference>
<dbReference type="PRINTS" id="PR01046">
    <property type="entry name" value="TRNASYNTHPRO"/>
</dbReference>
<dbReference type="SUPFAM" id="SSF52954">
    <property type="entry name" value="Class II aaRS ABD-related"/>
    <property type="match status" value="1"/>
</dbReference>
<dbReference type="SUPFAM" id="SSF55681">
    <property type="entry name" value="Class II aaRS and biotin synthetases"/>
    <property type="match status" value="1"/>
</dbReference>
<dbReference type="PROSITE" id="PS50862">
    <property type="entry name" value="AA_TRNA_LIGASE_II"/>
    <property type="match status" value="1"/>
</dbReference>
<accession>Q8UFV9</accession>
<accession>Q7CZK5</accession>
<comment type="function">
    <text evidence="1">Catalyzes the attachment of proline to tRNA(Pro) in a two-step reaction: proline is first activated by ATP to form Pro-AMP and then transferred to the acceptor end of tRNA(Pro).</text>
</comment>
<comment type="catalytic activity">
    <reaction evidence="1">
        <text>tRNA(Pro) + L-proline + ATP = L-prolyl-tRNA(Pro) + AMP + diphosphate</text>
        <dbReference type="Rhea" id="RHEA:14305"/>
        <dbReference type="Rhea" id="RHEA-COMP:9700"/>
        <dbReference type="Rhea" id="RHEA-COMP:9702"/>
        <dbReference type="ChEBI" id="CHEBI:30616"/>
        <dbReference type="ChEBI" id="CHEBI:33019"/>
        <dbReference type="ChEBI" id="CHEBI:60039"/>
        <dbReference type="ChEBI" id="CHEBI:78442"/>
        <dbReference type="ChEBI" id="CHEBI:78532"/>
        <dbReference type="ChEBI" id="CHEBI:456215"/>
        <dbReference type="EC" id="6.1.1.15"/>
    </reaction>
</comment>
<comment type="subunit">
    <text evidence="1">Homodimer.</text>
</comment>
<comment type="subcellular location">
    <subcellularLocation>
        <location evidence="1">Cytoplasm</location>
    </subcellularLocation>
</comment>
<comment type="similarity">
    <text evidence="1">Belongs to the class-II aminoacyl-tRNA synthetase family. ProS type 2 subfamily.</text>
</comment>
<feature type="chain" id="PRO_0000248886" description="Proline--tRNA ligase">
    <location>
        <begin position="1"/>
        <end position="440"/>
    </location>
</feature>
<gene>
    <name evidence="1" type="primary">proS</name>
    <name type="ordered locus">Atu1288</name>
    <name type="ORF">AGR_C_2372</name>
</gene>
<sequence length="440" mass="49609">MRLSRYFLPILKENPKEAEIVSHRLMLRAGMIRQQSAGIYSWLPLGKRVLDKVNKIIREEQNRAGAIELLMPTLQTAELWQESGRYDDYGKEMLRIKDRQDRQMLYGPTNEEMITDIFRSYVKSYKNLPLNLYHIQLKFRDEVRPRFGTMRSREFLMKDAYSFDLTKEDAIHSYNKMFVAYLRTFERLGLRAIPMRADTGPIGGNHSHEFIILADTGESEVFCHKSFLDRAIPAESTDFDDVAALQGVFDEWTADYAATSEMHDDAAYDAIPEGERLSARGIEVGHIFYFGTKYSEPMGAKVQGKDGKEHPVHMGSYGIGPTRLVPAIIEASHDENGIIWPASVAPFDVVIINMKAGDAACDAACEKLYYQLSNAGKDVLYDDTDDRAGQKFATADLIGVPVQIIVGPRSVANGEVEVKDRKTGERETVTIEAAMNKALG</sequence>